<protein>
    <recommendedName>
        <fullName>Mitochondrial import inner membrane translocase subunit TIM9</fullName>
    </recommendedName>
    <alternativeName>
        <fullName>Protein EMBRYO DEFECTIVE 2474</fullName>
    </alternativeName>
</protein>
<comment type="function">
    <text evidence="1">Mitochondrial intermembrane chaperone that participates in the import and insertion of multi-pass transmembrane proteins into the mitochondrial inner membrane. May also be required for the transfer of beta-barrel precursors from the TOM complex to the sorting and assembly machinery (SAM complex) of the outer membrane. Acts as a chaperone-like protein that protects the hydrophobic precursors from aggregation and guide them through the mitochondrial intermembrane space (By similarity).</text>
</comment>
<comment type="subunit">
    <text evidence="1">Heterohexamer; composed of 3 copies of TIM9 and 3 copies of TIM10, named soluble 70 kDa complex. The complex associates with the TIM22 component of the TIM22 complex. Interacts with multi-pass transmembrane proteins in transit (By similarity).</text>
</comment>
<comment type="subcellular location">
    <subcellularLocation>
        <location evidence="2">Mitochondrion intermembrane space</location>
    </subcellularLocation>
</comment>
<comment type="tissue specificity">
    <text evidence="2">Expressed in roots, flowers, young cotyledons and leaves.</text>
</comment>
<comment type="domain">
    <text evidence="1">The twin CX3C motif contains 4 conserved Cys residues that form 2 disulfide bonds in the mitochondrial intermembrane space. However, during the transit of TIM9 from cytoplasm into mitochondrion, the Cys residues probably coordinate zinc, thereby preventing folding and allowing its transfer across mitochondrial outer membrane (By similarity).</text>
</comment>
<comment type="similarity">
    <text evidence="3">Belongs to the small Tim family.</text>
</comment>
<sequence length="93" mass="10715">MDASMMAGLDGLPEEDKAKMASMIDQLQLRDSLRMYNSLVERCFVDCVDSFTRKSLQKQEETCVMRCAEKFLKHTMRVGMRFAELNQNAPTQD</sequence>
<proteinExistence type="evidence at protein level"/>
<reference key="1">
    <citation type="journal article" date="1999" name="FEBS Lett.">
        <title>The mitochondrial TIM22 preprotein translocase is highly conserved throughout the eukaryotic kingdom.</title>
        <authorList>
            <person name="Bauer M.F."/>
            <person name="Rothbauer U."/>
            <person name="Muehlenbein N."/>
            <person name="Smith R.J.H."/>
            <person name="Gerbitz K.-D."/>
            <person name="Neupert W."/>
            <person name="Brunner M."/>
            <person name="Hofmann S."/>
        </authorList>
    </citation>
    <scope>NUCLEOTIDE SEQUENCE [MRNA]</scope>
</reference>
<reference key="2">
    <citation type="journal article" date="2000" name="Nature">
        <title>Sequence and analysis of chromosome 3 of the plant Arabidopsis thaliana.</title>
        <authorList>
            <person name="Salanoubat M."/>
            <person name="Lemcke K."/>
            <person name="Rieger M."/>
            <person name="Ansorge W."/>
            <person name="Unseld M."/>
            <person name="Fartmann B."/>
            <person name="Valle G."/>
            <person name="Bloecker H."/>
            <person name="Perez-Alonso M."/>
            <person name="Obermaier B."/>
            <person name="Delseny M."/>
            <person name="Boutry M."/>
            <person name="Grivell L.A."/>
            <person name="Mache R."/>
            <person name="Puigdomenech P."/>
            <person name="De Simone V."/>
            <person name="Choisne N."/>
            <person name="Artiguenave F."/>
            <person name="Robert C."/>
            <person name="Brottier P."/>
            <person name="Wincker P."/>
            <person name="Cattolico L."/>
            <person name="Weissenbach J."/>
            <person name="Saurin W."/>
            <person name="Quetier F."/>
            <person name="Schaefer M."/>
            <person name="Mueller-Auer S."/>
            <person name="Gabel C."/>
            <person name="Fuchs M."/>
            <person name="Benes V."/>
            <person name="Wurmbach E."/>
            <person name="Drzonek H."/>
            <person name="Erfle H."/>
            <person name="Jordan N."/>
            <person name="Bangert S."/>
            <person name="Wiedelmann R."/>
            <person name="Kranz H."/>
            <person name="Voss H."/>
            <person name="Holland R."/>
            <person name="Brandt P."/>
            <person name="Nyakatura G."/>
            <person name="Vezzi A."/>
            <person name="D'Angelo M."/>
            <person name="Pallavicini A."/>
            <person name="Toppo S."/>
            <person name="Simionati B."/>
            <person name="Conrad A."/>
            <person name="Hornischer K."/>
            <person name="Kauer G."/>
            <person name="Loehnert T.-H."/>
            <person name="Nordsiek G."/>
            <person name="Reichelt J."/>
            <person name="Scharfe M."/>
            <person name="Schoen O."/>
            <person name="Bargues M."/>
            <person name="Terol J."/>
            <person name="Climent J."/>
            <person name="Navarro P."/>
            <person name="Collado C."/>
            <person name="Perez-Perez A."/>
            <person name="Ottenwaelder B."/>
            <person name="Duchemin D."/>
            <person name="Cooke R."/>
            <person name="Laudie M."/>
            <person name="Berger-Llauro C."/>
            <person name="Purnelle B."/>
            <person name="Masuy D."/>
            <person name="de Haan M."/>
            <person name="Maarse A.C."/>
            <person name="Alcaraz J.-P."/>
            <person name="Cottet A."/>
            <person name="Casacuberta E."/>
            <person name="Monfort A."/>
            <person name="Argiriou A."/>
            <person name="Flores M."/>
            <person name="Liguori R."/>
            <person name="Vitale D."/>
            <person name="Mannhaupt G."/>
            <person name="Haase D."/>
            <person name="Schoof H."/>
            <person name="Rudd S."/>
            <person name="Zaccaria P."/>
            <person name="Mewes H.-W."/>
            <person name="Mayer K.F.X."/>
            <person name="Kaul S."/>
            <person name="Town C.D."/>
            <person name="Koo H.L."/>
            <person name="Tallon L.J."/>
            <person name="Jenkins J."/>
            <person name="Rooney T."/>
            <person name="Rizzo M."/>
            <person name="Walts A."/>
            <person name="Utterback T."/>
            <person name="Fujii C.Y."/>
            <person name="Shea T.P."/>
            <person name="Creasy T.H."/>
            <person name="Haas B."/>
            <person name="Maiti R."/>
            <person name="Wu D."/>
            <person name="Peterson J."/>
            <person name="Van Aken S."/>
            <person name="Pai G."/>
            <person name="Militscher J."/>
            <person name="Sellers P."/>
            <person name="Gill J.E."/>
            <person name="Feldblyum T.V."/>
            <person name="Preuss D."/>
            <person name="Lin X."/>
            <person name="Nierman W.C."/>
            <person name="Salzberg S.L."/>
            <person name="White O."/>
            <person name="Venter J.C."/>
            <person name="Fraser C.M."/>
            <person name="Kaneko T."/>
            <person name="Nakamura Y."/>
            <person name="Sato S."/>
            <person name="Kato T."/>
            <person name="Asamizu E."/>
            <person name="Sasamoto S."/>
            <person name="Kimura T."/>
            <person name="Idesawa K."/>
            <person name="Kawashima K."/>
            <person name="Kishida Y."/>
            <person name="Kiyokawa C."/>
            <person name="Kohara M."/>
            <person name="Matsumoto M."/>
            <person name="Matsuno A."/>
            <person name="Muraki A."/>
            <person name="Nakayama S."/>
            <person name="Nakazaki N."/>
            <person name="Shinpo S."/>
            <person name="Takeuchi C."/>
            <person name="Wada T."/>
            <person name="Watanabe A."/>
            <person name="Yamada M."/>
            <person name="Yasuda M."/>
            <person name="Tabata S."/>
        </authorList>
    </citation>
    <scope>NUCLEOTIDE SEQUENCE [LARGE SCALE GENOMIC DNA]</scope>
    <source>
        <strain>cv. Columbia</strain>
    </source>
</reference>
<reference key="3">
    <citation type="journal article" date="2017" name="Plant J.">
        <title>Araport11: a complete reannotation of the Arabidopsis thaliana reference genome.</title>
        <authorList>
            <person name="Cheng C.Y."/>
            <person name="Krishnakumar V."/>
            <person name="Chan A.P."/>
            <person name="Thibaud-Nissen F."/>
            <person name="Schobel S."/>
            <person name="Town C.D."/>
        </authorList>
    </citation>
    <scope>GENOME REANNOTATION</scope>
    <source>
        <strain>cv. Columbia</strain>
    </source>
</reference>
<reference key="4">
    <citation type="journal article" date="2003" name="Science">
        <title>Empirical analysis of transcriptional activity in the Arabidopsis genome.</title>
        <authorList>
            <person name="Yamada K."/>
            <person name="Lim J."/>
            <person name="Dale J.M."/>
            <person name="Chen H."/>
            <person name="Shinn P."/>
            <person name="Palm C.J."/>
            <person name="Southwick A.M."/>
            <person name="Wu H.C."/>
            <person name="Kim C.J."/>
            <person name="Nguyen M."/>
            <person name="Pham P.K."/>
            <person name="Cheuk R.F."/>
            <person name="Karlin-Newmann G."/>
            <person name="Liu S.X."/>
            <person name="Lam B."/>
            <person name="Sakano H."/>
            <person name="Wu T."/>
            <person name="Yu G."/>
            <person name="Miranda M."/>
            <person name="Quach H.L."/>
            <person name="Tripp M."/>
            <person name="Chang C.H."/>
            <person name="Lee J.M."/>
            <person name="Toriumi M.J."/>
            <person name="Chan M.M."/>
            <person name="Tang C.C."/>
            <person name="Onodera C.S."/>
            <person name="Deng J.M."/>
            <person name="Akiyama K."/>
            <person name="Ansari Y."/>
            <person name="Arakawa T."/>
            <person name="Banh J."/>
            <person name="Banno F."/>
            <person name="Bowser L."/>
            <person name="Brooks S.Y."/>
            <person name="Carninci P."/>
            <person name="Chao Q."/>
            <person name="Choy N."/>
            <person name="Enju A."/>
            <person name="Goldsmith A.D."/>
            <person name="Gurjal M."/>
            <person name="Hansen N.F."/>
            <person name="Hayashizaki Y."/>
            <person name="Johnson-Hopson C."/>
            <person name="Hsuan V.W."/>
            <person name="Iida K."/>
            <person name="Karnes M."/>
            <person name="Khan S."/>
            <person name="Koesema E."/>
            <person name="Ishida J."/>
            <person name="Jiang P.X."/>
            <person name="Jones T."/>
            <person name="Kawai J."/>
            <person name="Kamiya A."/>
            <person name="Meyers C."/>
            <person name="Nakajima M."/>
            <person name="Narusaka M."/>
            <person name="Seki M."/>
            <person name="Sakurai T."/>
            <person name="Satou M."/>
            <person name="Tamse R."/>
            <person name="Vaysberg M."/>
            <person name="Wallender E.K."/>
            <person name="Wong C."/>
            <person name="Yamamura Y."/>
            <person name="Yuan S."/>
            <person name="Shinozaki K."/>
            <person name="Davis R.W."/>
            <person name="Theologis A."/>
            <person name="Ecker J.R."/>
        </authorList>
    </citation>
    <scope>NUCLEOTIDE SEQUENCE [LARGE SCALE MRNA]</scope>
    <source>
        <strain>cv. Columbia</strain>
    </source>
</reference>
<reference key="5">
    <citation type="submission" date="2002-03" db="EMBL/GenBank/DDBJ databases">
        <title>Full-length cDNA from Arabidopsis thaliana.</title>
        <authorList>
            <person name="Brover V.V."/>
            <person name="Troukhan M.E."/>
            <person name="Alexandrov N.A."/>
            <person name="Lu Y.-P."/>
            <person name="Flavell R.B."/>
            <person name="Feldmann K.A."/>
        </authorList>
    </citation>
    <scope>NUCLEOTIDE SEQUENCE [LARGE SCALE MRNA]</scope>
</reference>
<reference key="6">
    <citation type="journal article" date="2004" name="Plant Physiol.">
        <title>A transcriptomic and proteomic characterization of the Arabidopsis mitochondrial protein import apparatus and its response to mitochondrial dysfunction.</title>
        <authorList>
            <person name="Lister R."/>
            <person name="Chew O."/>
            <person name="Lee M.N."/>
            <person name="Heazlewood J.L."/>
            <person name="Clifton R."/>
            <person name="Parker K.L."/>
            <person name="Millar A.H."/>
            <person name="Whelan J."/>
        </authorList>
    </citation>
    <scope>TISSUE SPECIFICITY</scope>
    <scope>SUBCELLULAR LOCATION</scope>
    <scope>IDENTIFICATION BY MASS SPECTROMETRY</scope>
</reference>
<name>TIM9_ARATH</name>
<gene>
    <name type="primary">TIM9</name>
    <name type="synonym">EMB2474</name>
    <name type="ordered locus">At3g46560</name>
    <name type="ORF">F12A12.80</name>
</gene>
<evidence type="ECO:0000250" key="1"/>
<evidence type="ECO:0000269" key="2">
    <source>
    </source>
</evidence>
<evidence type="ECO:0000305" key="3"/>
<organism>
    <name type="scientific">Arabidopsis thaliana</name>
    <name type="common">Mouse-ear cress</name>
    <dbReference type="NCBI Taxonomy" id="3702"/>
    <lineage>
        <taxon>Eukaryota</taxon>
        <taxon>Viridiplantae</taxon>
        <taxon>Streptophyta</taxon>
        <taxon>Embryophyta</taxon>
        <taxon>Tracheophyta</taxon>
        <taxon>Spermatophyta</taxon>
        <taxon>Magnoliopsida</taxon>
        <taxon>eudicotyledons</taxon>
        <taxon>Gunneridae</taxon>
        <taxon>Pentapetalae</taxon>
        <taxon>rosids</taxon>
        <taxon>malvids</taxon>
        <taxon>Brassicales</taxon>
        <taxon>Brassicaceae</taxon>
        <taxon>Camelineae</taxon>
        <taxon>Arabidopsis</taxon>
    </lineage>
</organism>
<accession>Q9XGX9</accession>
<accession>Q8L927</accession>
<accession>Q9SNC2</accession>
<keyword id="KW-0143">Chaperone</keyword>
<keyword id="KW-1015">Disulfide bond</keyword>
<keyword id="KW-0479">Metal-binding</keyword>
<keyword id="KW-0496">Mitochondrion</keyword>
<keyword id="KW-0653">Protein transport</keyword>
<keyword id="KW-1185">Reference proteome</keyword>
<keyword id="KW-0811">Translocation</keyword>
<keyword id="KW-0813">Transport</keyword>
<keyword id="KW-0862">Zinc</keyword>
<dbReference type="EMBL" id="AF150111">
    <property type="protein sequence ID" value="AAD40017.1"/>
    <property type="molecule type" value="mRNA"/>
</dbReference>
<dbReference type="EMBL" id="AL133314">
    <property type="protein sequence ID" value="CAB62326.1"/>
    <property type="molecule type" value="Genomic_DNA"/>
</dbReference>
<dbReference type="EMBL" id="CP002686">
    <property type="protein sequence ID" value="AEE78172.1"/>
    <property type="molecule type" value="Genomic_DNA"/>
</dbReference>
<dbReference type="EMBL" id="AY045940">
    <property type="protein sequence ID" value="AAK76614.1"/>
    <property type="molecule type" value="mRNA"/>
</dbReference>
<dbReference type="EMBL" id="AY079412">
    <property type="protein sequence ID" value="AAL85143.1"/>
    <property type="molecule type" value="mRNA"/>
</dbReference>
<dbReference type="EMBL" id="AY088670">
    <property type="protein sequence ID" value="AAM66992.1"/>
    <property type="molecule type" value="mRNA"/>
</dbReference>
<dbReference type="PIR" id="T45593">
    <property type="entry name" value="T45593"/>
</dbReference>
<dbReference type="PIR" id="T51187">
    <property type="entry name" value="T51187"/>
</dbReference>
<dbReference type="RefSeq" id="NP_190240.1">
    <property type="nucleotide sequence ID" value="NM_114523.5"/>
</dbReference>
<dbReference type="SMR" id="Q9XGX9"/>
<dbReference type="BioGRID" id="9129">
    <property type="interactions" value="1"/>
</dbReference>
<dbReference type="FunCoup" id="Q9XGX9">
    <property type="interactions" value="3480"/>
</dbReference>
<dbReference type="STRING" id="3702.Q9XGX9"/>
<dbReference type="iPTMnet" id="Q9XGX9"/>
<dbReference type="PaxDb" id="3702-AT3G46560.1"/>
<dbReference type="ProteomicsDB" id="234357"/>
<dbReference type="EnsemblPlants" id="AT3G46560.1">
    <property type="protein sequence ID" value="AT3G46560.1"/>
    <property type="gene ID" value="AT3G46560"/>
</dbReference>
<dbReference type="GeneID" id="823809"/>
<dbReference type="Gramene" id="AT3G46560.1">
    <property type="protein sequence ID" value="AT3G46560.1"/>
    <property type="gene ID" value="AT3G46560"/>
</dbReference>
<dbReference type="KEGG" id="ath:AT3G46560"/>
<dbReference type="Araport" id="AT3G46560"/>
<dbReference type="TAIR" id="AT3G46560">
    <property type="gene designation" value="TIM9"/>
</dbReference>
<dbReference type="eggNOG" id="KOG3479">
    <property type="taxonomic scope" value="Eukaryota"/>
</dbReference>
<dbReference type="HOGENOM" id="CLU_141397_3_2_1"/>
<dbReference type="InParanoid" id="Q9XGX9"/>
<dbReference type="OMA" id="QDFLRMY"/>
<dbReference type="OrthoDB" id="1551503at2759"/>
<dbReference type="PhylomeDB" id="Q9XGX9"/>
<dbReference type="CD-CODE" id="4299E36E">
    <property type="entry name" value="Nucleolus"/>
</dbReference>
<dbReference type="PRO" id="PR:Q9XGX9"/>
<dbReference type="Proteomes" id="UP000006548">
    <property type="component" value="Chromosome 3"/>
</dbReference>
<dbReference type="ExpressionAtlas" id="Q9XGX9">
    <property type="expression patterns" value="baseline and differential"/>
</dbReference>
<dbReference type="GO" id="GO:0005829">
    <property type="term" value="C:cytosol"/>
    <property type="evidence" value="ECO:0007005"/>
    <property type="project" value="TAIR"/>
</dbReference>
<dbReference type="GO" id="GO:0005758">
    <property type="term" value="C:mitochondrial intermembrane space"/>
    <property type="evidence" value="ECO:0007005"/>
    <property type="project" value="TAIR"/>
</dbReference>
<dbReference type="GO" id="GO:0005739">
    <property type="term" value="C:mitochondrion"/>
    <property type="evidence" value="ECO:0000314"/>
    <property type="project" value="TAIR"/>
</dbReference>
<dbReference type="GO" id="GO:0046872">
    <property type="term" value="F:metal ion binding"/>
    <property type="evidence" value="ECO:0007669"/>
    <property type="project" value="UniProtKB-KW"/>
</dbReference>
<dbReference type="GO" id="GO:0007005">
    <property type="term" value="P:mitochondrion organization"/>
    <property type="evidence" value="ECO:0000315"/>
    <property type="project" value="TAIR"/>
</dbReference>
<dbReference type="GO" id="GO:0015031">
    <property type="term" value="P:protein transport"/>
    <property type="evidence" value="ECO:0007669"/>
    <property type="project" value="UniProtKB-KW"/>
</dbReference>
<dbReference type="FunFam" id="1.10.287.810:FF:000008">
    <property type="entry name" value="Mitochondrial import inner membrane translocase subunit TIM9"/>
    <property type="match status" value="1"/>
</dbReference>
<dbReference type="Gene3D" id="1.10.287.810">
    <property type="entry name" value="Mitochondrial import inner membrane translocase subunit tim13 like domains"/>
    <property type="match status" value="1"/>
</dbReference>
<dbReference type="InterPro" id="IPR050673">
    <property type="entry name" value="Mito_inner_translocase_sub"/>
</dbReference>
<dbReference type="InterPro" id="IPR004217">
    <property type="entry name" value="Tim10-like"/>
</dbReference>
<dbReference type="InterPro" id="IPR035427">
    <property type="entry name" value="Tim10-like_dom_sf"/>
</dbReference>
<dbReference type="PANTHER" id="PTHR13172">
    <property type="entry name" value="MITOCHONDRIAL IMPORT INNER MEMBRANE TRANSLOCASE SUBUNIT TIM9B"/>
    <property type="match status" value="1"/>
</dbReference>
<dbReference type="Pfam" id="PF02953">
    <property type="entry name" value="zf-Tim10_DDP"/>
    <property type="match status" value="1"/>
</dbReference>
<dbReference type="SUPFAM" id="SSF144122">
    <property type="entry name" value="Tim10-like"/>
    <property type="match status" value="1"/>
</dbReference>
<feature type="chain" id="PRO_0000193605" description="Mitochondrial import inner membrane translocase subunit TIM9">
    <location>
        <begin position="1"/>
        <end position="93"/>
    </location>
</feature>
<feature type="short sequence motif" description="Twin CX3C motif">
    <location>
        <begin position="43"/>
        <end position="67"/>
    </location>
</feature>
<feature type="disulfide bond" evidence="1">
    <location>
        <begin position="43"/>
        <end position="67"/>
    </location>
</feature>
<feature type="disulfide bond" evidence="1">
    <location>
        <begin position="47"/>
        <end position="63"/>
    </location>
</feature>
<feature type="sequence conflict" description="In Ref. 5; AAM66992." evidence="3" ref="5">
    <original>M</original>
    <variation>L</variation>
    <location>
        <position position="35"/>
    </location>
</feature>
<feature type="sequence conflict" description="In Ref. 1; AAD40017." evidence="3" ref="1">
    <original>V</original>
    <variation>F</variation>
    <location>
        <position position="48"/>
    </location>
</feature>
<feature type="sequence conflict" description="In Ref. 1; AAD40017." evidence="3" ref="1">
    <original>A</original>
    <variation>S</variation>
    <location>
        <position position="83"/>
    </location>
</feature>